<dbReference type="EC" id="2.6.1.52" evidence="1"/>
<dbReference type="EMBL" id="AE003852">
    <property type="protein sequence ID" value="AAF94318.1"/>
    <property type="status" value="ALT_INIT"/>
    <property type="molecule type" value="Genomic_DNA"/>
</dbReference>
<dbReference type="PIR" id="G82233">
    <property type="entry name" value="G82233"/>
</dbReference>
<dbReference type="RefSeq" id="NP_230804.1">
    <property type="nucleotide sequence ID" value="NC_002505.1"/>
</dbReference>
<dbReference type="RefSeq" id="WP_000400868.1">
    <property type="nucleotide sequence ID" value="NZ_LT906614.1"/>
</dbReference>
<dbReference type="SMR" id="Q9KSU7"/>
<dbReference type="STRING" id="243277.VC_1159"/>
<dbReference type="DNASU" id="2614592"/>
<dbReference type="EnsemblBacteria" id="AAF94318">
    <property type="protein sequence ID" value="AAF94318"/>
    <property type="gene ID" value="VC_1159"/>
</dbReference>
<dbReference type="KEGG" id="vch:VC_1159"/>
<dbReference type="PATRIC" id="fig|243277.26.peg.1108"/>
<dbReference type="eggNOG" id="COG1932">
    <property type="taxonomic scope" value="Bacteria"/>
</dbReference>
<dbReference type="HOGENOM" id="CLU_034866_0_2_6"/>
<dbReference type="UniPathway" id="UPA00135">
    <property type="reaction ID" value="UER00197"/>
</dbReference>
<dbReference type="UniPathway" id="UPA00244">
    <property type="reaction ID" value="UER00311"/>
</dbReference>
<dbReference type="Proteomes" id="UP000000584">
    <property type="component" value="Chromosome 1"/>
</dbReference>
<dbReference type="GO" id="GO:0005737">
    <property type="term" value="C:cytoplasm"/>
    <property type="evidence" value="ECO:0000318"/>
    <property type="project" value="GO_Central"/>
</dbReference>
<dbReference type="GO" id="GO:0004648">
    <property type="term" value="F:O-phospho-L-serine:2-oxoglutarate aminotransferase activity"/>
    <property type="evidence" value="ECO:0000318"/>
    <property type="project" value="GO_Central"/>
</dbReference>
<dbReference type="GO" id="GO:0030170">
    <property type="term" value="F:pyridoxal phosphate binding"/>
    <property type="evidence" value="ECO:0000318"/>
    <property type="project" value="GO_Central"/>
</dbReference>
<dbReference type="GO" id="GO:0006564">
    <property type="term" value="P:L-serine biosynthetic process"/>
    <property type="evidence" value="ECO:0000318"/>
    <property type="project" value="GO_Central"/>
</dbReference>
<dbReference type="GO" id="GO:0008615">
    <property type="term" value="P:pyridoxine biosynthetic process"/>
    <property type="evidence" value="ECO:0007669"/>
    <property type="project" value="UniProtKB-UniRule"/>
</dbReference>
<dbReference type="CDD" id="cd00611">
    <property type="entry name" value="PSAT_like"/>
    <property type="match status" value="1"/>
</dbReference>
<dbReference type="FunFam" id="3.40.640.10:FF:000010">
    <property type="entry name" value="Phosphoserine aminotransferase"/>
    <property type="match status" value="1"/>
</dbReference>
<dbReference type="FunFam" id="3.90.1150.10:FF:000006">
    <property type="entry name" value="Phosphoserine aminotransferase"/>
    <property type="match status" value="1"/>
</dbReference>
<dbReference type="Gene3D" id="3.90.1150.10">
    <property type="entry name" value="Aspartate Aminotransferase, domain 1"/>
    <property type="match status" value="1"/>
</dbReference>
<dbReference type="Gene3D" id="3.40.640.10">
    <property type="entry name" value="Type I PLP-dependent aspartate aminotransferase-like (Major domain)"/>
    <property type="match status" value="1"/>
</dbReference>
<dbReference type="HAMAP" id="MF_00160">
    <property type="entry name" value="SerC_aminotrans_5"/>
    <property type="match status" value="1"/>
</dbReference>
<dbReference type="InterPro" id="IPR000192">
    <property type="entry name" value="Aminotrans_V_dom"/>
</dbReference>
<dbReference type="InterPro" id="IPR022278">
    <property type="entry name" value="Pser_aminoTfrase"/>
</dbReference>
<dbReference type="InterPro" id="IPR015424">
    <property type="entry name" value="PyrdxlP-dep_Trfase"/>
</dbReference>
<dbReference type="InterPro" id="IPR015421">
    <property type="entry name" value="PyrdxlP-dep_Trfase_major"/>
</dbReference>
<dbReference type="InterPro" id="IPR015422">
    <property type="entry name" value="PyrdxlP-dep_Trfase_small"/>
</dbReference>
<dbReference type="NCBIfam" id="NF003764">
    <property type="entry name" value="PRK05355.1"/>
    <property type="match status" value="1"/>
</dbReference>
<dbReference type="NCBIfam" id="TIGR01364">
    <property type="entry name" value="serC_1"/>
    <property type="match status" value="1"/>
</dbReference>
<dbReference type="PANTHER" id="PTHR43247">
    <property type="entry name" value="PHOSPHOSERINE AMINOTRANSFERASE"/>
    <property type="match status" value="1"/>
</dbReference>
<dbReference type="PANTHER" id="PTHR43247:SF1">
    <property type="entry name" value="PHOSPHOSERINE AMINOTRANSFERASE"/>
    <property type="match status" value="1"/>
</dbReference>
<dbReference type="Pfam" id="PF00266">
    <property type="entry name" value="Aminotran_5"/>
    <property type="match status" value="1"/>
</dbReference>
<dbReference type="PIRSF" id="PIRSF000525">
    <property type="entry name" value="SerC"/>
    <property type="match status" value="1"/>
</dbReference>
<dbReference type="SUPFAM" id="SSF53383">
    <property type="entry name" value="PLP-dependent transferases"/>
    <property type="match status" value="1"/>
</dbReference>
<comment type="function">
    <text evidence="1">Catalyzes the reversible conversion of 3-phosphohydroxypyruvate to phosphoserine and of 3-hydroxy-2-oxo-4-phosphonooxybutanoate to phosphohydroxythreonine.</text>
</comment>
<comment type="catalytic activity">
    <reaction evidence="1">
        <text>O-phospho-L-serine + 2-oxoglutarate = 3-phosphooxypyruvate + L-glutamate</text>
        <dbReference type="Rhea" id="RHEA:14329"/>
        <dbReference type="ChEBI" id="CHEBI:16810"/>
        <dbReference type="ChEBI" id="CHEBI:18110"/>
        <dbReference type="ChEBI" id="CHEBI:29985"/>
        <dbReference type="ChEBI" id="CHEBI:57524"/>
        <dbReference type="EC" id="2.6.1.52"/>
    </reaction>
</comment>
<comment type="catalytic activity">
    <reaction evidence="1">
        <text>4-(phosphooxy)-L-threonine + 2-oxoglutarate = (R)-3-hydroxy-2-oxo-4-phosphooxybutanoate + L-glutamate</text>
        <dbReference type="Rhea" id="RHEA:16573"/>
        <dbReference type="ChEBI" id="CHEBI:16810"/>
        <dbReference type="ChEBI" id="CHEBI:29985"/>
        <dbReference type="ChEBI" id="CHEBI:58452"/>
        <dbReference type="ChEBI" id="CHEBI:58538"/>
        <dbReference type="EC" id="2.6.1.52"/>
    </reaction>
</comment>
<comment type="cofactor">
    <cofactor evidence="1">
        <name>pyridoxal 5'-phosphate</name>
        <dbReference type="ChEBI" id="CHEBI:597326"/>
    </cofactor>
    <text evidence="1">Binds 1 pyridoxal phosphate per subunit.</text>
</comment>
<comment type="pathway">
    <text evidence="1">Amino-acid biosynthesis; L-serine biosynthesis; L-serine from 3-phospho-D-glycerate: step 2/3.</text>
</comment>
<comment type="pathway">
    <text evidence="1">Cofactor biosynthesis; pyridoxine 5'-phosphate biosynthesis; pyridoxine 5'-phosphate from D-erythrose 4-phosphate: step 3/5.</text>
</comment>
<comment type="subunit">
    <text evidence="1">Homodimer.</text>
</comment>
<comment type="subcellular location">
    <subcellularLocation>
        <location evidence="1">Cytoplasm</location>
    </subcellularLocation>
</comment>
<comment type="similarity">
    <text evidence="1">Belongs to the class-V pyridoxal-phosphate-dependent aminotransferase family. SerC subfamily.</text>
</comment>
<comment type="sequence caution" evidence="2">
    <conflict type="erroneous initiation">
        <sequence resource="EMBL-CDS" id="AAF94318"/>
    </conflict>
</comment>
<reference key="1">
    <citation type="journal article" date="2000" name="Nature">
        <title>DNA sequence of both chromosomes of the cholera pathogen Vibrio cholerae.</title>
        <authorList>
            <person name="Heidelberg J.F."/>
            <person name="Eisen J.A."/>
            <person name="Nelson W.C."/>
            <person name="Clayton R.A."/>
            <person name="Gwinn M.L."/>
            <person name="Dodson R.J."/>
            <person name="Haft D.H."/>
            <person name="Hickey E.K."/>
            <person name="Peterson J.D."/>
            <person name="Umayam L.A."/>
            <person name="Gill S.R."/>
            <person name="Nelson K.E."/>
            <person name="Read T.D."/>
            <person name="Tettelin H."/>
            <person name="Richardson D.L."/>
            <person name="Ermolaeva M.D."/>
            <person name="Vamathevan J.J."/>
            <person name="Bass S."/>
            <person name="Qin H."/>
            <person name="Dragoi I."/>
            <person name="Sellers P."/>
            <person name="McDonald L.A."/>
            <person name="Utterback T.R."/>
            <person name="Fleischmann R.D."/>
            <person name="Nierman W.C."/>
            <person name="White O."/>
            <person name="Salzberg S.L."/>
            <person name="Smith H.O."/>
            <person name="Colwell R.R."/>
            <person name="Mekalanos J.J."/>
            <person name="Venter J.C."/>
            <person name="Fraser C.M."/>
        </authorList>
    </citation>
    <scope>NUCLEOTIDE SEQUENCE [LARGE SCALE GENOMIC DNA]</scope>
    <source>
        <strain>ATCC 39315 / El Tor Inaba N16961</strain>
    </source>
</reference>
<protein>
    <recommendedName>
        <fullName evidence="1">Phosphoserine aminotransferase</fullName>
        <ecNumber evidence="1">2.6.1.52</ecNumber>
    </recommendedName>
    <alternativeName>
        <fullName evidence="1">Phosphohydroxythreonine aminotransferase</fullName>
        <shortName evidence="1">PSAT</shortName>
    </alternativeName>
</protein>
<accession>Q9KSU7</accession>
<sequence>MEHNTDTVYNFSAGPAALPKAVMLQAQAEFVNWNHLGTSVMEISHRSQPFIQVAEHAERDLRDLLNIPDNYKVLFCQGGARAQFAAVPLNLLGDAETATYIDAGYWAMSAVKEAKKYCTVDVFDAKIEKEGKIAVLPASEWRIANNAAYVHFCPNETIDGIEINDLPVTDKPIVADMSSTILSREIDVSKYGVIYAGAQKNIGPAGICIAIVRDDLLDLASDLLPGVLNYKILAEQESMFNTPPTFAWYLSGLVFQWLKAQGGVKAIEEVNRAKAALLYGYIDSSDFYRNEIHPDNRSLMNVPFQLAKPELDDTFLELAEARGLVSLKGHRVVGGMRASIYNAMPLEGVQALVDFMKEFEAQYA</sequence>
<keyword id="KW-0028">Amino-acid biosynthesis</keyword>
<keyword id="KW-0032">Aminotransferase</keyword>
<keyword id="KW-0963">Cytoplasm</keyword>
<keyword id="KW-0663">Pyridoxal phosphate</keyword>
<keyword id="KW-0664">Pyridoxine biosynthesis</keyword>
<keyword id="KW-1185">Reference proteome</keyword>
<keyword id="KW-0718">Serine biosynthesis</keyword>
<keyword id="KW-0808">Transferase</keyword>
<feature type="chain" id="PRO_0000150214" description="Phosphoserine aminotransferase">
    <location>
        <begin position="1"/>
        <end position="364"/>
    </location>
</feature>
<feature type="binding site" evidence="1">
    <location>
        <position position="46"/>
    </location>
    <ligand>
        <name>L-glutamate</name>
        <dbReference type="ChEBI" id="CHEBI:29985"/>
    </ligand>
</feature>
<feature type="binding site" evidence="1">
    <location>
        <begin position="80"/>
        <end position="81"/>
    </location>
    <ligand>
        <name>pyridoxal 5'-phosphate</name>
        <dbReference type="ChEBI" id="CHEBI:597326"/>
    </ligand>
</feature>
<feature type="binding site" evidence="1">
    <location>
        <position position="106"/>
    </location>
    <ligand>
        <name>pyridoxal 5'-phosphate</name>
        <dbReference type="ChEBI" id="CHEBI:597326"/>
    </ligand>
</feature>
<feature type="binding site" evidence="1">
    <location>
        <position position="157"/>
    </location>
    <ligand>
        <name>pyridoxal 5'-phosphate</name>
        <dbReference type="ChEBI" id="CHEBI:597326"/>
    </ligand>
</feature>
<feature type="binding site" evidence="1">
    <location>
        <position position="176"/>
    </location>
    <ligand>
        <name>pyridoxal 5'-phosphate</name>
        <dbReference type="ChEBI" id="CHEBI:597326"/>
    </ligand>
</feature>
<feature type="binding site" evidence="1">
    <location>
        <position position="199"/>
    </location>
    <ligand>
        <name>pyridoxal 5'-phosphate</name>
        <dbReference type="ChEBI" id="CHEBI:597326"/>
    </ligand>
</feature>
<feature type="binding site" evidence="1">
    <location>
        <begin position="241"/>
        <end position="242"/>
    </location>
    <ligand>
        <name>pyridoxal 5'-phosphate</name>
        <dbReference type="ChEBI" id="CHEBI:597326"/>
    </ligand>
</feature>
<feature type="modified residue" description="N6-(pyridoxal phosphate)lysine" evidence="1">
    <location>
        <position position="200"/>
    </location>
</feature>
<proteinExistence type="inferred from homology"/>
<organism>
    <name type="scientific">Vibrio cholerae serotype O1 (strain ATCC 39315 / El Tor Inaba N16961)</name>
    <dbReference type="NCBI Taxonomy" id="243277"/>
    <lineage>
        <taxon>Bacteria</taxon>
        <taxon>Pseudomonadati</taxon>
        <taxon>Pseudomonadota</taxon>
        <taxon>Gammaproteobacteria</taxon>
        <taxon>Vibrionales</taxon>
        <taxon>Vibrionaceae</taxon>
        <taxon>Vibrio</taxon>
    </lineage>
</organism>
<evidence type="ECO:0000255" key="1">
    <source>
        <dbReference type="HAMAP-Rule" id="MF_00160"/>
    </source>
</evidence>
<evidence type="ECO:0000305" key="2"/>
<gene>
    <name evidence="1" type="primary">serC</name>
    <name type="ordered locus">VC_1159</name>
</gene>
<name>SERC_VIBCH</name>